<sequence>MKNFQDKIKKLVPEMRRVNQIHFIGIGGAGMSGIAEVLLNEGYQISGSDIAEGPVTKRLAEAGAKVFIGHQAENVAGASVVVASSAIDDSNPEVRAAKEARIPVIQRAQMLAEIMRFRHGIAVAGTHGKTTTTAMISMIYTEAKLDPTFVNGGLVKSAGKNAHLGASRYLIAEADESDASFLHLQPMVSVVTNIEPDHMDTYGGDFEQMKATYVKFLRNLPFYGLAVMCADDETVIEIAPQVGRQVLTYGFSEKADYRIEDYQQTGFQGHYTVVCPNGERIDVLLNVPGKHNALNATAALAVAKEEGIANEAILAALADFQGAGRRFDQLGSFIRPNGKVMLVDDYGHHPTEVDVTIKAARSGWENKRVVMIFQPHRYSRTRDLFDDFVQVLSQVDALIMLEVYAAGEAPIVGADSKALCRSIRNLGKVDPILVSDTDQLGEVLDQIIQDGDLILAQGAGSVSRISRGLAESWKA</sequence>
<protein>
    <recommendedName>
        <fullName evidence="1">UDP-N-acetylmuramate--L-alanine ligase</fullName>
        <ecNumber evidence="1">6.3.2.8</ecNumber>
    </recommendedName>
    <alternativeName>
        <fullName evidence="1">UDP-N-acetylmuramoyl-L-alanine synthetase</fullName>
    </alternativeName>
</protein>
<organism>
    <name type="scientific">Actinobacillus pleuropneumoniae serotype 3 (strain JL03)</name>
    <dbReference type="NCBI Taxonomy" id="434271"/>
    <lineage>
        <taxon>Bacteria</taxon>
        <taxon>Pseudomonadati</taxon>
        <taxon>Pseudomonadota</taxon>
        <taxon>Gammaproteobacteria</taxon>
        <taxon>Pasteurellales</taxon>
        <taxon>Pasteurellaceae</taxon>
        <taxon>Actinobacillus</taxon>
    </lineage>
</organism>
<reference key="1">
    <citation type="journal article" date="2008" name="PLoS ONE">
        <title>Genome biology of Actinobacillus pleuropneumoniae JL03, an isolate of serotype 3 prevalent in China.</title>
        <authorList>
            <person name="Xu Z."/>
            <person name="Zhou Y."/>
            <person name="Li L."/>
            <person name="Zhou R."/>
            <person name="Xiao S."/>
            <person name="Wan Y."/>
            <person name="Zhang S."/>
            <person name="Wang K."/>
            <person name="Li W."/>
            <person name="Li L."/>
            <person name="Jin H."/>
            <person name="Kang M."/>
            <person name="Dalai B."/>
            <person name="Li T."/>
            <person name="Liu L."/>
            <person name="Cheng Y."/>
            <person name="Zhang L."/>
            <person name="Xu T."/>
            <person name="Zheng H."/>
            <person name="Pu S."/>
            <person name="Wang B."/>
            <person name="Gu W."/>
            <person name="Zhang X.L."/>
            <person name="Zhu G.-F."/>
            <person name="Wang S."/>
            <person name="Zhao G.-P."/>
            <person name="Chen H."/>
        </authorList>
    </citation>
    <scope>NUCLEOTIDE SEQUENCE [LARGE SCALE GENOMIC DNA]</scope>
    <source>
        <strain>JL03</strain>
    </source>
</reference>
<accession>B0BRH8</accession>
<dbReference type="EC" id="6.3.2.8" evidence="1"/>
<dbReference type="EMBL" id="CP000687">
    <property type="protein sequence ID" value="ABY68626.1"/>
    <property type="molecule type" value="Genomic_DNA"/>
</dbReference>
<dbReference type="RefSeq" id="WP_005595615.1">
    <property type="nucleotide sequence ID" value="NC_010278.1"/>
</dbReference>
<dbReference type="SMR" id="B0BRH8"/>
<dbReference type="GeneID" id="48598160"/>
<dbReference type="KEGG" id="apj:APJL_0020"/>
<dbReference type="HOGENOM" id="CLU_028104_2_2_6"/>
<dbReference type="UniPathway" id="UPA00219"/>
<dbReference type="Proteomes" id="UP000008547">
    <property type="component" value="Chromosome"/>
</dbReference>
<dbReference type="GO" id="GO:0005737">
    <property type="term" value="C:cytoplasm"/>
    <property type="evidence" value="ECO:0007669"/>
    <property type="project" value="UniProtKB-SubCell"/>
</dbReference>
<dbReference type="GO" id="GO:0005524">
    <property type="term" value="F:ATP binding"/>
    <property type="evidence" value="ECO:0007669"/>
    <property type="project" value="UniProtKB-UniRule"/>
</dbReference>
<dbReference type="GO" id="GO:0008763">
    <property type="term" value="F:UDP-N-acetylmuramate-L-alanine ligase activity"/>
    <property type="evidence" value="ECO:0007669"/>
    <property type="project" value="UniProtKB-UniRule"/>
</dbReference>
<dbReference type="GO" id="GO:0051301">
    <property type="term" value="P:cell division"/>
    <property type="evidence" value="ECO:0007669"/>
    <property type="project" value="UniProtKB-KW"/>
</dbReference>
<dbReference type="GO" id="GO:0071555">
    <property type="term" value="P:cell wall organization"/>
    <property type="evidence" value="ECO:0007669"/>
    <property type="project" value="UniProtKB-KW"/>
</dbReference>
<dbReference type="GO" id="GO:0009252">
    <property type="term" value="P:peptidoglycan biosynthetic process"/>
    <property type="evidence" value="ECO:0007669"/>
    <property type="project" value="UniProtKB-UniRule"/>
</dbReference>
<dbReference type="GO" id="GO:0008360">
    <property type="term" value="P:regulation of cell shape"/>
    <property type="evidence" value="ECO:0007669"/>
    <property type="project" value="UniProtKB-KW"/>
</dbReference>
<dbReference type="FunFam" id="3.40.1190.10:FF:000001">
    <property type="entry name" value="UDP-N-acetylmuramate--L-alanine ligase"/>
    <property type="match status" value="1"/>
</dbReference>
<dbReference type="FunFam" id="3.40.50.720:FF:000046">
    <property type="entry name" value="UDP-N-acetylmuramate--L-alanine ligase"/>
    <property type="match status" value="1"/>
</dbReference>
<dbReference type="Gene3D" id="3.90.190.20">
    <property type="entry name" value="Mur ligase, C-terminal domain"/>
    <property type="match status" value="1"/>
</dbReference>
<dbReference type="Gene3D" id="3.40.1190.10">
    <property type="entry name" value="Mur-like, catalytic domain"/>
    <property type="match status" value="1"/>
</dbReference>
<dbReference type="Gene3D" id="3.40.50.720">
    <property type="entry name" value="NAD(P)-binding Rossmann-like Domain"/>
    <property type="match status" value="1"/>
</dbReference>
<dbReference type="HAMAP" id="MF_00046">
    <property type="entry name" value="MurC"/>
    <property type="match status" value="1"/>
</dbReference>
<dbReference type="InterPro" id="IPR036565">
    <property type="entry name" value="Mur-like_cat_sf"/>
</dbReference>
<dbReference type="InterPro" id="IPR004101">
    <property type="entry name" value="Mur_ligase_C"/>
</dbReference>
<dbReference type="InterPro" id="IPR036615">
    <property type="entry name" value="Mur_ligase_C_dom_sf"/>
</dbReference>
<dbReference type="InterPro" id="IPR013221">
    <property type="entry name" value="Mur_ligase_cen"/>
</dbReference>
<dbReference type="InterPro" id="IPR000713">
    <property type="entry name" value="Mur_ligase_N"/>
</dbReference>
<dbReference type="InterPro" id="IPR050061">
    <property type="entry name" value="MurCDEF_pg_biosynth"/>
</dbReference>
<dbReference type="InterPro" id="IPR005758">
    <property type="entry name" value="UDP-N-AcMur_Ala_ligase_MurC"/>
</dbReference>
<dbReference type="NCBIfam" id="TIGR01082">
    <property type="entry name" value="murC"/>
    <property type="match status" value="1"/>
</dbReference>
<dbReference type="PANTHER" id="PTHR43445:SF3">
    <property type="entry name" value="UDP-N-ACETYLMURAMATE--L-ALANINE LIGASE"/>
    <property type="match status" value="1"/>
</dbReference>
<dbReference type="PANTHER" id="PTHR43445">
    <property type="entry name" value="UDP-N-ACETYLMURAMATE--L-ALANINE LIGASE-RELATED"/>
    <property type="match status" value="1"/>
</dbReference>
<dbReference type="Pfam" id="PF01225">
    <property type="entry name" value="Mur_ligase"/>
    <property type="match status" value="1"/>
</dbReference>
<dbReference type="Pfam" id="PF02875">
    <property type="entry name" value="Mur_ligase_C"/>
    <property type="match status" value="1"/>
</dbReference>
<dbReference type="Pfam" id="PF08245">
    <property type="entry name" value="Mur_ligase_M"/>
    <property type="match status" value="1"/>
</dbReference>
<dbReference type="SUPFAM" id="SSF51984">
    <property type="entry name" value="MurCD N-terminal domain"/>
    <property type="match status" value="1"/>
</dbReference>
<dbReference type="SUPFAM" id="SSF53623">
    <property type="entry name" value="MurD-like peptide ligases, catalytic domain"/>
    <property type="match status" value="1"/>
</dbReference>
<dbReference type="SUPFAM" id="SSF53244">
    <property type="entry name" value="MurD-like peptide ligases, peptide-binding domain"/>
    <property type="match status" value="1"/>
</dbReference>
<keyword id="KW-0067">ATP-binding</keyword>
<keyword id="KW-0131">Cell cycle</keyword>
<keyword id="KW-0132">Cell division</keyword>
<keyword id="KW-0133">Cell shape</keyword>
<keyword id="KW-0961">Cell wall biogenesis/degradation</keyword>
<keyword id="KW-0963">Cytoplasm</keyword>
<keyword id="KW-0436">Ligase</keyword>
<keyword id="KW-0547">Nucleotide-binding</keyword>
<keyword id="KW-0573">Peptidoglycan synthesis</keyword>
<evidence type="ECO:0000255" key="1">
    <source>
        <dbReference type="HAMAP-Rule" id="MF_00046"/>
    </source>
</evidence>
<gene>
    <name evidence="1" type="primary">murC</name>
    <name type="ordered locus">APJL_0020</name>
</gene>
<proteinExistence type="inferred from homology"/>
<feature type="chain" id="PRO_1000091074" description="UDP-N-acetylmuramate--L-alanine ligase">
    <location>
        <begin position="1"/>
        <end position="475"/>
    </location>
</feature>
<feature type="binding site" evidence="1">
    <location>
        <begin position="125"/>
        <end position="131"/>
    </location>
    <ligand>
        <name>ATP</name>
        <dbReference type="ChEBI" id="CHEBI:30616"/>
    </ligand>
</feature>
<comment type="function">
    <text evidence="1">Cell wall formation.</text>
</comment>
<comment type="catalytic activity">
    <reaction evidence="1">
        <text>UDP-N-acetyl-alpha-D-muramate + L-alanine + ATP = UDP-N-acetyl-alpha-D-muramoyl-L-alanine + ADP + phosphate + H(+)</text>
        <dbReference type="Rhea" id="RHEA:23372"/>
        <dbReference type="ChEBI" id="CHEBI:15378"/>
        <dbReference type="ChEBI" id="CHEBI:30616"/>
        <dbReference type="ChEBI" id="CHEBI:43474"/>
        <dbReference type="ChEBI" id="CHEBI:57972"/>
        <dbReference type="ChEBI" id="CHEBI:70757"/>
        <dbReference type="ChEBI" id="CHEBI:83898"/>
        <dbReference type="ChEBI" id="CHEBI:456216"/>
        <dbReference type="EC" id="6.3.2.8"/>
    </reaction>
</comment>
<comment type="pathway">
    <text evidence="1">Cell wall biogenesis; peptidoglycan biosynthesis.</text>
</comment>
<comment type="subcellular location">
    <subcellularLocation>
        <location evidence="1">Cytoplasm</location>
    </subcellularLocation>
</comment>
<comment type="similarity">
    <text evidence="1">Belongs to the MurCDEF family.</text>
</comment>
<name>MURC_ACTPJ</name>